<organism>
    <name type="scientific">Staphylococcus aureus (strain JH9)</name>
    <dbReference type="NCBI Taxonomy" id="359786"/>
    <lineage>
        <taxon>Bacteria</taxon>
        <taxon>Bacillati</taxon>
        <taxon>Bacillota</taxon>
        <taxon>Bacilli</taxon>
        <taxon>Bacillales</taxon>
        <taxon>Staphylococcaceae</taxon>
        <taxon>Staphylococcus</taxon>
    </lineage>
</organism>
<accession>A5IQX7</accession>
<comment type="catalytic activity">
    <reaction evidence="1">
        <text>(2R)-3-phosphoglycerate + ATP = (2R)-3-phospho-glyceroyl phosphate + ADP</text>
        <dbReference type="Rhea" id="RHEA:14801"/>
        <dbReference type="ChEBI" id="CHEBI:30616"/>
        <dbReference type="ChEBI" id="CHEBI:57604"/>
        <dbReference type="ChEBI" id="CHEBI:58272"/>
        <dbReference type="ChEBI" id="CHEBI:456216"/>
        <dbReference type="EC" id="2.7.2.3"/>
    </reaction>
</comment>
<comment type="pathway">
    <text evidence="1">Carbohydrate degradation; glycolysis; pyruvate from D-glyceraldehyde 3-phosphate: step 2/5.</text>
</comment>
<comment type="subunit">
    <text evidence="1">Monomer.</text>
</comment>
<comment type="subcellular location">
    <subcellularLocation>
        <location evidence="1">Cytoplasm</location>
    </subcellularLocation>
</comment>
<comment type="similarity">
    <text evidence="1">Belongs to the phosphoglycerate kinase family.</text>
</comment>
<dbReference type="EC" id="2.7.2.3" evidence="1"/>
<dbReference type="EMBL" id="CP000703">
    <property type="protein sequence ID" value="ABQ48600.1"/>
    <property type="molecule type" value="Genomic_DNA"/>
</dbReference>
<dbReference type="RefSeq" id="WP_001074749.1">
    <property type="nucleotide sequence ID" value="NC_009487.1"/>
</dbReference>
<dbReference type="SMR" id="A5IQX7"/>
<dbReference type="KEGG" id="saj:SaurJH9_0798"/>
<dbReference type="HOGENOM" id="CLU_025427_0_2_9"/>
<dbReference type="UniPathway" id="UPA00109">
    <property type="reaction ID" value="UER00185"/>
</dbReference>
<dbReference type="GO" id="GO:0005829">
    <property type="term" value="C:cytosol"/>
    <property type="evidence" value="ECO:0007669"/>
    <property type="project" value="TreeGrafter"/>
</dbReference>
<dbReference type="GO" id="GO:0043531">
    <property type="term" value="F:ADP binding"/>
    <property type="evidence" value="ECO:0007669"/>
    <property type="project" value="TreeGrafter"/>
</dbReference>
<dbReference type="GO" id="GO:0005524">
    <property type="term" value="F:ATP binding"/>
    <property type="evidence" value="ECO:0007669"/>
    <property type="project" value="UniProtKB-KW"/>
</dbReference>
<dbReference type="GO" id="GO:0004618">
    <property type="term" value="F:phosphoglycerate kinase activity"/>
    <property type="evidence" value="ECO:0007669"/>
    <property type="project" value="UniProtKB-UniRule"/>
</dbReference>
<dbReference type="GO" id="GO:0006094">
    <property type="term" value="P:gluconeogenesis"/>
    <property type="evidence" value="ECO:0007669"/>
    <property type="project" value="TreeGrafter"/>
</dbReference>
<dbReference type="GO" id="GO:0006096">
    <property type="term" value="P:glycolytic process"/>
    <property type="evidence" value="ECO:0007669"/>
    <property type="project" value="UniProtKB-UniRule"/>
</dbReference>
<dbReference type="CDD" id="cd00318">
    <property type="entry name" value="Phosphoglycerate_kinase"/>
    <property type="match status" value="1"/>
</dbReference>
<dbReference type="FunFam" id="3.40.50.1260:FF:000001">
    <property type="entry name" value="Phosphoglycerate kinase"/>
    <property type="match status" value="1"/>
</dbReference>
<dbReference type="FunFam" id="3.40.50.1260:FF:000008">
    <property type="entry name" value="Phosphoglycerate kinase"/>
    <property type="match status" value="1"/>
</dbReference>
<dbReference type="Gene3D" id="3.40.50.1260">
    <property type="entry name" value="Phosphoglycerate kinase, N-terminal domain"/>
    <property type="match status" value="2"/>
</dbReference>
<dbReference type="HAMAP" id="MF_00145">
    <property type="entry name" value="Phosphoglyc_kinase"/>
    <property type="match status" value="1"/>
</dbReference>
<dbReference type="InterPro" id="IPR001576">
    <property type="entry name" value="Phosphoglycerate_kinase"/>
</dbReference>
<dbReference type="InterPro" id="IPR015911">
    <property type="entry name" value="Phosphoglycerate_kinase_CS"/>
</dbReference>
<dbReference type="InterPro" id="IPR015824">
    <property type="entry name" value="Phosphoglycerate_kinase_N"/>
</dbReference>
<dbReference type="InterPro" id="IPR036043">
    <property type="entry name" value="Phosphoglycerate_kinase_sf"/>
</dbReference>
<dbReference type="PANTHER" id="PTHR11406">
    <property type="entry name" value="PHOSPHOGLYCERATE KINASE"/>
    <property type="match status" value="1"/>
</dbReference>
<dbReference type="PANTHER" id="PTHR11406:SF23">
    <property type="entry name" value="PHOSPHOGLYCERATE KINASE 1, CHLOROPLASTIC-RELATED"/>
    <property type="match status" value="1"/>
</dbReference>
<dbReference type="Pfam" id="PF00162">
    <property type="entry name" value="PGK"/>
    <property type="match status" value="1"/>
</dbReference>
<dbReference type="PIRSF" id="PIRSF000724">
    <property type="entry name" value="Pgk"/>
    <property type="match status" value="1"/>
</dbReference>
<dbReference type="PRINTS" id="PR00477">
    <property type="entry name" value="PHGLYCKINASE"/>
</dbReference>
<dbReference type="SUPFAM" id="SSF53748">
    <property type="entry name" value="Phosphoglycerate kinase"/>
    <property type="match status" value="1"/>
</dbReference>
<dbReference type="PROSITE" id="PS00111">
    <property type="entry name" value="PGLYCERATE_KINASE"/>
    <property type="match status" value="1"/>
</dbReference>
<keyword id="KW-0067">ATP-binding</keyword>
<keyword id="KW-0963">Cytoplasm</keyword>
<keyword id="KW-0324">Glycolysis</keyword>
<keyword id="KW-0418">Kinase</keyword>
<keyword id="KW-0547">Nucleotide-binding</keyword>
<keyword id="KW-0808">Transferase</keyword>
<reference key="1">
    <citation type="submission" date="2007-05" db="EMBL/GenBank/DDBJ databases">
        <title>Complete sequence of chromosome of Staphylococcus aureus subsp. aureus JH9.</title>
        <authorList>
            <consortium name="US DOE Joint Genome Institute"/>
            <person name="Copeland A."/>
            <person name="Lucas S."/>
            <person name="Lapidus A."/>
            <person name="Barry K."/>
            <person name="Detter J.C."/>
            <person name="Glavina del Rio T."/>
            <person name="Hammon N."/>
            <person name="Israni S."/>
            <person name="Pitluck S."/>
            <person name="Chain P."/>
            <person name="Malfatti S."/>
            <person name="Shin M."/>
            <person name="Vergez L."/>
            <person name="Schmutz J."/>
            <person name="Larimer F."/>
            <person name="Land M."/>
            <person name="Hauser L."/>
            <person name="Kyrpides N."/>
            <person name="Kim E."/>
            <person name="Tomasz A."/>
            <person name="Richardson P."/>
        </authorList>
    </citation>
    <scope>NUCLEOTIDE SEQUENCE [LARGE SCALE GENOMIC DNA]</scope>
    <source>
        <strain>JH9</strain>
    </source>
</reference>
<gene>
    <name evidence="1" type="primary">pgk</name>
    <name type="ordered locus">SaurJH9_0798</name>
</gene>
<evidence type="ECO:0000255" key="1">
    <source>
        <dbReference type="HAMAP-Rule" id="MF_00145"/>
    </source>
</evidence>
<feature type="chain" id="PRO_1000076611" description="Phosphoglycerate kinase">
    <location>
        <begin position="1"/>
        <end position="396"/>
    </location>
</feature>
<feature type="binding site" evidence="1">
    <location>
        <begin position="21"/>
        <end position="23"/>
    </location>
    <ligand>
        <name>substrate</name>
    </ligand>
</feature>
<feature type="binding site" evidence="1">
    <location>
        <position position="36"/>
    </location>
    <ligand>
        <name>substrate</name>
    </ligand>
</feature>
<feature type="binding site" evidence="1">
    <location>
        <begin position="59"/>
        <end position="62"/>
    </location>
    <ligand>
        <name>substrate</name>
    </ligand>
</feature>
<feature type="binding site" evidence="1">
    <location>
        <position position="119"/>
    </location>
    <ligand>
        <name>substrate</name>
    </ligand>
</feature>
<feature type="binding site" evidence="1">
    <location>
        <position position="156"/>
    </location>
    <ligand>
        <name>substrate</name>
    </ligand>
</feature>
<feature type="binding site" evidence="1">
    <location>
        <position position="206"/>
    </location>
    <ligand>
        <name>ATP</name>
        <dbReference type="ChEBI" id="CHEBI:30616"/>
    </ligand>
</feature>
<feature type="binding site" evidence="1">
    <location>
        <position position="294"/>
    </location>
    <ligand>
        <name>ATP</name>
        <dbReference type="ChEBI" id="CHEBI:30616"/>
    </ligand>
</feature>
<feature type="binding site" evidence="1">
    <location>
        <position position="325"/>
    </location>
    <ligand>
        <name>ATP</name>
        <dbReference type="ChEBI" id="CHEBI:30616"/>
    </ligand>
</feature>
<feature type="binding site" evidence="1">
    <location>
        <begin position="352"/>
        <end position="355"/>
    </location>
    <ligand>
        <name>ATP</name>
        <dbReference type="ChEBI" id="CHEBI:30616"/>
    </ligand>
</feature>
<sequence>MAKKIVSDLDLKGKTVLVRADFNVPLKDGEITNDNRIVQALPTIQYIIEQGGKIVLFSHLGKVKEESDKAKLTLRPVAEDLSKKLDKEVVFVPETRGEKLEAAIKDLKEGDVLLVENTRYEDLDGKKESKNDPELGKYWASLGDVFVNDAFGTAHREHASNVGISTHLETAAGFLMDKEIKFIGGVVNDPHKPVVAILGGAKVSDKINVIKNLVNIADKIIIGGGMAYTFLKAQGKEIGISLLEEDKIDFAKDLLEKHGDKIVLPVDTKVAKEFSNDAKITVVPSDSIPADQEGMDIGPNTVKLFADELEGAHTVVWNGPMGVFEFSNFAQGTIGVCKAIANLKDAITIIGGGDSAAAAISLGFENDFTHISTGGGASLEYLEGKELPGIKAINNK</sequence>
<proteinExistence type="inferred from homology"/>
<name>PGK_STAA9</name>
<protein>
    <recommendedName>
        <fullName evidence="1">Phosphoglycerate kinase</fullName>
        <ecNumber evidence="1">2.7.2.3</ecNumber>
    </recommendedName>
</protein>